<gene>
    <name type="primary">MET6</name>
    <name type="ordered locus">YER091C</name>
</gene>
<comment type="function">
    <text>Catalyzes the transfer of a methyl group from 5-methyltetrahydrofolate to homocysteine resulting in methionine formation.</text>
</comment>
<comment type="catalytic activity">
    <reaction>
        <text>5-methyltetrahydropteroyltri-L-glutamate + L-homocysteine = tetrahydropteroyltri-L-glutamate + L-methionine</text>
        <dbReference type="Rhea" id="RHEA:21196"/>
        <dbReference type="ChEBI" id="CHEBI:57844"/>
        <dbReference type="ChEBI" id="CHEBI:58140"/>
        <dbReference type="ChEBI" id="CHEBI:58199"/>
        <dbReference type="ChEBI" id="CHEBI:58207"/>
        <dbReference type="EC" id="2.1.1.14"/>
    </reaction>
</comment>
<comment type="cofactor">
    <cofactor evidence="1">
        <name>Zn(2+)</name>
        <dbReference type="ChEBI" id="CHEBI:29105"/>
    </cofactor>
</comment>
<comment type="pathway">
    <text>Amino-acid biosynthesis; L-methionine biosynthesis via de novo pathway; L-methionine from L-homocysteine (MetE route): step 1/1.</text>
</comment>
<comment type="miscellaneous">
    <text evidence="4">Present with 264000 molecules/cell in log phase SD medium.</text>
</comment>
<comment type="similarity">
    <text evidence="6">Belongs to the vitamin-B12 independent methionine synthase family.</text>
</comment>
<dbReference type="EC" id="2.1.1.14"/>
<dbReference type="EMBL" id="U32508">
    <property type="protein sequence ID" value="AAB60301.1"/>
    <property type="molecule type" value="Genomic_DNA"/>
</dbReference>
<dbReference type="EMBL" id="U15099">
    <property type="protein sequence ID" value="AAA65711.1"/>
    <property type="molecule type" value="Genomic_DNA"/>
</dbReference>
<dbReference type="EMBL" id="DQ393811">
    <property type="protein sequence ID" value="ABD57965.1"/>
    <property type="molecule type" value="Genomic_DNA"/>
</dbReference>
<dbReference type="EMBL" id="DQ393812">
    <property type="protein sequence ID" value="ABD57966.1"/>
    <property type="molecule type" value="Genomic_DNA"/>
</dbReference>
<dbReference type="EMBL" id="U18839">
    <property type="protein sequence ID" value="AAB64646.1"/>
    <property type="molecule type" value="Genomic_DNA"/>
</dbReference>
<dbReference type="EMBL" id="X07238">
    <property type="protein sequence ID" value="CAA30227.1"/>
    <property type="molecule type" value="Genomic_DNA"/>
</dbReference>
<dbReference type="EMBL" id="BK006939">
    <property type="protein sequence ID" value="DAA07752.1"/>
    <property type="molecule type" value="Genomic_DNA"/>
</dbReference>
<dbReference type="PIR" id="S50594">
    <property type="entry name" value="S50594"/>
</dbReference>
<dbReference type="RefSeq" id="NP_011015.3">
    <property type="nucleotide sequence ID" value="NM_001178982.3"/>
</dbReference>
<dbReference type="SMR" id="P05694"/>
<dbReference type="BioGRID" id="36836">
    <property type="interactions" value="203"/>
</dbReference>
<dbReference type="DIP" id="DIP-6472N"/>
<dbReference type="FunCoup" id="P05694">
    <property type="interactions" value="750"/>
</dbReference>
<dbReference type="IntAct" id="P05694">
    <property type="interactions" value="64"/>
</dbReference>
<dbReference type="MINT" id="P05694"/>
<dbReference type="STRING" id="4932.YER091C"/>
<dbReference type="CarbonylDB" id="P05694"/>
<dbReference type="iPTMnet" id="P05694"/>
<dbReference type="PaxDb" id="4932-YER091C"/>
<dbReference type="PeptideAtlas" id="P05694"/>
<dbReference type="TopDownProteomics" id="P05694"/>
<dbReference type="EnsemblFungi" id="YER091C_mRNA">
    <property type="protein sequence ID" value="YER091C"/>
    <property type="gene ID" value="YER091C"/>
</dbReference>
<dbReference type="GeneID" id="856825"/>
<dbReference type="KEGG" id="sce:YER091C"/>
<dbReference type="AGR" id="SGD:S000000893"/>
<dbReference type="SGD" id="S000000893">
    <property type="gene designation" value="MET6"/>
</dbReference>
<dbReference type="VEuPathDB" id="FungiDB:YER091C"/>
<dbReference type="eggNOG" id="KOG2263">
    <property type="taxonomic scope" value="Eukaryota"/>
</dbReference>
<dbReference type="HOGENOM" id="CLU_013175_0_0_1"/>
<dbReference type="InParanoid" id="P05694"/>
<dbReference type="OMA" id="KVMKGML"/>
<dbReference type="OrthoDB" id="1053771at2759"/>
<dbReference type="BioCyc" id="MetaCyc:YER091C-MONOMER"/>
<dbReference type="BioCyc" id="YEAST:YER091C-MONOMER"/>
<dbReference type="BRENDA" id="2.1.1.14">
    <property type="organism ID" value="984"/>
</dbReference>
<dbReference type="UniPathway" id="UPA00051">
    <property type="reaction ID" value="UER00082"/>
</dbReference>
<dbReference type="BioGRID-ORCS" id="856825">
    <property type="hits" value="7 hits in 10 CRISPR screens"/>
</dbReference>
<dbReference type="PRO" id="PR:P05694"/>
<dbReference type="Proteomes" id="UP000002311">
    <property type="component" value="Chromosome V"/>
</dbReference>
<dbReference type="RNAct" id="P05694">
    <property type="molecule type" value="protein"/>
</dbReference>
<dbReference type="GO" id="GO:0005737">
    <property type="term" value="C:cytoplasm"/>
    <property type="evidence" value="ECO:0007005"/>
    <property type="project" value="SGD"/>
</dbReference>
<dbReference type="GO" id="GO:0005886">
    <property type="term" value="C:plasma membrane"/>
    <property type="evidence" value="ECO:0007005"/>
    <property type="project" value="SGD"/>
</dbReference>
<dbReference type="GO" id="GO:0003871">
    <property type="term" value="F:5-methyltetrahydropteroyltriglutamate-homocysteine S-methyltransferase activity"/>
    <property type="evidence" value="ECO:0000315"/>
    <property type="project" value="SGD"/>
</dbReference>
<dbReference type="GO" id="GO:0008270">
    <property type="term" value="F:zinc ion binding"/>
    <property type="evidence" value="ECO:0007669"/>
    <property type="project" value="InterPro"/>
</dbReference>
<dbReference type="GO" id="GO:0009086">
    <property type="term" value="P:methionine biosynthetic process"/>
    <property type="evidence" value="ECO:0000315"/>
    <property type="project" value="SGD"/>
</dbReference>
<dbReference type="GO" id="GO:0032259">
    <property type="term" value="P:methylation"/>
    <property type="evidence" value="ECO:0007669"/>
    <property type="project" value="UniProtKB-KW"/>
</dbReference>
<dbReference type="CDD" id="cd03311">
    <property type="entry name" value="CIMS_C_terminal_like"/>
    <property type="match status" value="1"/>
</dbReference>
<dbReference type="CDD" id="cd03312">
    <property type="entry name" value="CIMS_N_terminal_like"/>
    <property type="match status" value="1"/>
</dbReference>
<dbReference type="FunFam" id="3.20.20.210:FF:000003">
    <property type="entry name" value="5-methyltetrahydropteroyltriglutamate--homocysteine methyltransferase"/>
    <property type="match status" value="1"/>
</dbReference>
<dbReference type="Gene3D" id="3.20.20.210">
    <property type="match status" value="2"/>
</dbReference>
<dbReference type="HAMAP" id="MF_00172">
    <property type="entry name" value="Meth_synth"/>
    <property type="match status" value="1"/>
</dbReference>
<dbReference type="InterPro" id="IPR013215">
    <property type="entry name" value="Cbl-indep_Met_Synth_N"/>
</dbReference>
<dbReference type="InterPro" id="IPR006276">
    <property type="entry name" value="Cobalamin-indep_Met_synthase"/>
</dbReference>
<dbReference type="InterPro" id="IPR002629">
    <property type="entry name" value="Met_Synth_C/arc"/>
</dbReference>
<dbReference type="InterPro" id="IPR038071">
    <property type="entry name" value="UROD/MetE-like_sf"/>
</dbReference>
<dbReference type="NCBIfam" id="TIGR01371">
    <property type="entry name" value="met_syn_B12ind"/>
    <property type="match status" value="1"/>
</dbReference>
<dbReference type="NCBIfam" id="NF003556">
    <property type="entry name" value="PRK05222.1"/>
    <property type="match status" value="1"/>
</dbReference>
<dbReference type="PANTHER" id="PTHR30519">
    <property type="entry name" value="5-METHYLTETRAHYDROPTEROYLTRIGLUTAMATE--HOMOCYSTEINE METHYLTRANSFERASE"/>
    <property type="match status" value="1"/>
</dbReference>
<dbReference type="Pfam" id="PF08267">
    <property type="entry name" value="Meth_synt_1"/>
    <property type="match status" value="1"/>
</dbReference>
<dbReference type="Pfam" id="PF01717">
    <property type="entry name" value="Meth_synt_2"/>
    <property type="match status" value="1"/>
</dbReference>
<dbReference type="PIRSF" id="PIRSF000382">
    <property type="entry name" value="MeTrfase_B12_ind"/>
    <property type="match status" value="1"/>
</dbReference>
<dbReference type="SUPFAM" id="SSF51726">
    <property type="entry name" value="UROD/MetE-like"/>
    <property type="match status" value="2"/>
</dbReference>
<name>METE_YEAST</name>
<keyword id="KW-0028">Amino-acid biosynthesis</keyword>
<keyword id="KW-0903">Direct protein sequencing</keyword>
<keyword id="KW-0479">Metal-binding</keyword>
<keyword id="KW-0486">Methionine biosynthesis</keyword>
<keyword id="KW-0489">Methyltransferase</keyword>
<keyword id="KW-0597">Phosphoprotein</keyword>
<keyword id="KW-1185">Reference proteome</keyword>
<keyword id="KW-0808">Transferase</keyword>
<keyword id="KW-0862">Zinc</keyword>
<proteinExistence type="evidence at protein level"/>
<protein>
    <recommendedName>
        <fullName>5-methyltetrahydropteroyltriglutamate--homocysteine methyltransferase</fullName>
        <ecNumber>2.1.1.14</ecNumber>
    </recommendedName>
    <alternativeName>
        <fullName>Cobalamin-independent methionine synthase</fullName>
    </alternativeName>
    <alternativeName>
        <fullName>Delta-P8 protein</fullName>
    </alternativeName>
    <alternativeName>
        <fullName>Methionine synthase, vitamin-B12 independent isozyme</fullName>
    </alternativeName>
</protein>
<feature type="initiator methionine" description="Removed" evidence="5">
    <location>
        <position position="1"/>
    </location>
</feature>
<feature type="chain" id="PRO_0000098704" description="5-methyltetrahydropteroyltriglutamate--homocysteine methyltransferase">
    <location>
        <begin position="2"/>
        <end position="767"/>
    </location>
</feature>
<feature type="active site" description="Proton donor" evidence="3">
    <location>
        <position position="705"/>
    </location>
</feature>
<feature type="binding site" evidence="3">
    <location>
        <position position="19"/>
    </location>
    <ligand>
        <name>5-methyltetrahydropteroyltri-L-glutamate</name>
        <dbReference type="ChEBI" id="CHEBI:58207"/>
    </ligand>
</feature>
<feature type="binding site" evidence="3">
    <location>
        <position position="126"/>
    </location>
    <ligand>
        <name>5-methyltetrahydropteroyltri-L-glutamate</name>
        <dbReference type="ChEBI" id="CHEBI:58207"/>
    </ligand>
</feature>
<feature type="binding site" evidence="3">
    <location>
        <begin position="444"/>
        <end position="446"/>
    </location>
    <ligand>
        <name>L-homocysteine</name>
        <dbReference type="ChEBI" id="CHEBI:58199"/>
    </ligand>
</feature>
<feature type="binding site" evidence="3">
    <location>
        <begin position="444"/>
        <end position="446"/>
    </location>
    <ligand>
        <name>L-methionine</name>
        <dbReference type="ChEBI" id="CHEBI:57844"/>
    </ligand>
</feature>
<feature type="binding site" evidence="3">
    <location>
        <position position="497"/>
    </location>
    <ligand>
        <name>L-homocysteine</name>
        <dbReference type="ChEBI" id="CHEBI:58199"/>
    </ligand>
</feature>
<feature type="binding site" evidence="3">
    <location>
        <position position="497"/>
    </location>
    <ligand>
        <name>L-methionine</name>
        <dbReference type="ChEBI" id="CHEBI:57844"/>
    </ligand>
</feature>
<feature type="binding site" evidence="3">
    <location>
        <position position="502"/>
    </location>
    <ligand>
        <name>5-methyltetrahydropteroyltri-L-glutamate</name>
        <dbReference type="ChEBI" id="CHEBI:58207"/>
    </ligand>
</feature>
<feature type="binding site" evidence="3">
    <location>
        <position position="525"/>
    </location>
    <ligand>
        <name>5-methyltetrahydropteroyltri-L-glutamate</name>
        <dbReference type="ChEBI" id="CHEBI:58207"/>
    </ligand>
</feature>
<feature type="binding site" evidence="2">
    <location>
        <begin position="528"/>
        <end position="529"/>
    </location>
    <ligand>
        <name>5-methyltetrahydropteroyltri-L-glutamate</name>
        <dbReference type="ChEBI" id="CHEBI:58207"/>
    </ligand>
</feature>
<feature type="binding site" evidence="3">
    <location>
        <position position="574"/>
    </location>
    <ligand>
        <name>5-methyltetrahydropteroyltri-L-glutamate</name>
        <dbReference type="ChEBI" id="CHEBI:58207"/>
    </ligand>
</feature>
<feature type="binding site" evidence="3">
    <location>
        <position position="612"/>
    </location>
    <ligand>
        <name>L-homocysteine</name>
        <dbReference type="ChEBI" id="CHEBI:58199"/>
    </ligand>
</feature>
<feature type="binding site" evidence="3">
    <location>
        <position position="612"/>
    </location>
    <ligand>
        <name>L-methionine</name>
        <dbReference type="ChEBI" id="CHEBI:57844"/>
    </ligand>
</feature>
<feature type="binding site" evidence="2">
    <location>
        <position position="655"/>
    </location>
    <ligand>
        <name>Zn(2+)</name>
        <dbReference type="ChEBI" id="CHEBI:29105"/>
        <note>catalytic</note>
    </ligand>
</feature>
<feature type="binding site" evidence="2">
    <location>
        <position position="657"/>
    </location>
    <ligand>
        <name>Zn(2+)</name>
        <dbReference type="ChEBI" id="CHEBI:29105"/>
        <note>catalytic</note>
    </ligand>
</feature>
<feature type="binding site" evidence="3">
    <location>
        <position position="677"/>
    </location>
    <ligand>
        <name>Zn(2+)</name>
        <dbReference type="ChEBI" id="CHEBI:29105"/>
        <note>catalytic</note>
    </ligand>
</feature>
<feature type="binding site" evidence="2">
    <location>
        <position position="737"/>
    </location>
    <ligand>
        <name>Zn(2+)</name>
        <dbReference type="ChEBI" id="CHEBI:29105"/>
        <note>catalytic</note>
    </ligand>
</feature>
<feature type="modified residue" description="Phosphoserine" evidence="7">
    <location>
        <position position="89"/>
    </location>
</feature>
<feature type="modified residue" description="Phosphoserine" evidence="8">
    <location>
        <position position="242"/>
    </location>
</feature>
<feature type="modified residue" description="Phosphothreonine" evidence="9">
    <location>
        <position position="566"/>
    </location>
</feature>
<feature type="modified residue" description="Phosphoserine" evidence="9">
    <location>
        <position position="629"/>
    </location>
</feature>
<feature type="modified residue" description="Phosphoserine" evidence="7 9">
    <location>
        <position position="706"/>
    </location>
</feature>
<feature type="sequence conflict" description="In Ref. 6; CAA30227." evidence="6" ref="6">
    <original>LSLLFNVIP</original>
    <variation>FVFVVQCHS</variation>
    <location>
        <begin position="72"/>
        <end position="80"/>
    </location>
</feature>
<feature type="sequence conflict" description="In Ref. 2; AAA65711." evidence="6" ref="2">
    <original>A</original>
    <variation>R</variation>
    <location>
        <position position="407"/>
    </location>
</feature>
<sequence>MVQSAVLGFPRIGPNRELKKATEGYWNGKITVDELFKVGKDLRTQNWKLQKEAGVDIIPSNDFSFYDQVLDLSLLFNVIPDRYTKYDLSPIDTLFAMGRGLQRKATETEKAVDVTALEMVKWFDSNYHYVRPTFSKTTQFKLNGQKPVDEFLEAKELGIHTRPVLLGPVSYLFLGKADKDSLDLEPLSLLEQLLPLYTEILSKLASAGATEVQIDEPVLVLDLPANAQAAIKKAYTYFGEQSNLPKITLATYFGTVVPNLDAIKGLPVAALHVDFVRAPEQFDEVVAAIGNKQTLSVGIVDGRNIWKNDFKKSSAIVNKAIEKLGADRVVVATSSSLLHTPVDLNNETKLDAEIKGFFSFATQKLDEVVVITKNVSGQDVAAALEANAKSVESRGKSKFIHDAAVKARVASIDEKMSTRAAPFEQRLPEQQKVFNLPLFPTTTIGSFPQTKDIRINRNKFNKGTISAEEYEKFINSEIEKVIRFQEEIGLDVLVHGEPERNDMVQYFGEQINGYAFTVNGWVQSYGSRYVRPPIIVGDLSRPKAMSVKESVYAQSITSKPVKGMLTGPITCLRWSFPRDDVDQKTQAMQLALALRDEVNDLEAAGIKVIQVDEPALREGLPLREGTERSAYYTWAAEAFRVATSGVANKTQIHSHFCYSDLDPNHIKALDADVVSIEFSKKDDANYIAEFKNYPNHIGLGLFDIHSPRIPSKDEFIAKISTILKSYPAEKFWVNPDCGLKTRGWEETRLSLTHMVEAAKYFREQYKN</sequence>
<evidence type="ECO:0000250" key="1"/>
<evidence type="ECO:0000250" key="2">
    <source>
        <dbReference type="UniProtKB" id="O50008"/>
    </source>
</evidence>
<evidence type="ECO:0000250" key="3">
    <source>
        <dbReference type="UniProtKB" id="P82610"/>
    </source>
</evidence>
<evidence type="ECO:0000269" key="4">
    <source>
    </source>
</evidence>
<evidence type="ECO:0000269" key="5">
    <source>
    </source>
</evidence>
<evidence type="ECO:0000305" key="6"/>
<evidence type="ECO:0007744" key="7">
    <source>
    </source>
</evidence>
<evidence type="ECO:0007744" key="8">
    <source>
    </source>
</evidence>
<evidence type="ECO:0007744" key="9">
    <source>
    </source>
</evidence>
<organism>
    <name type="scientific">Saccharomyces cerevisiae (strain ATCC 204508 / S288c)</name>
    <name type="common">Baker's yeast</name>
    <dbReference type="NCBI Taxonomy" id="559292"/>
    <lineage>
        <taxon>Eukaryota</taxon>
        <taxon>Fungi</taxon>
        <taxon>Dikarya</taxon>
        <taxon>Ascomycota</taxon>
        <taxon>Saccharomycotina</taxon>
        <taxon>Saccharomycetes</taxon>
        <taxon>Saccharomycetales</taxon>
        <taxon>Saccharomycetaceae</taxon>
        <taxon>Saccharomyces</taxon>
    </lineage>
</organism>
<reference key="1">
    <citation type="submission" date="1995-07" db="EMBL/GenBank/DDBJ databases">
        <title>Structure and regulation of MET6, the vitamin B12-independent methionine synthase gene of Saccharomyces cerevisiae.</title>
        <authorList>
            <person name="Korch C."/>
            <person name="Mountain H.A."/>
            <person name="Wenzlau J.M."/>
        </authorList>
    </citation>
    <scope>NUCLEOTIDE SEQUENCE [GENOMIC DNA]</scope>
    <source>
        <strain>ATCC 204508 / S288c</strain>
    </source>
</reference>
<reference key="2">
    <citation type="thesis" date="1995" institute="Medical College of Ohio / Toledo" country="United States">
        <title>Cloning and characterization of MET6: a cobalamin-independent methionine synthase in Saccharomyces cerevisiae.</title>
        <authorList>
            <person name="McClurg J.C."/>
        </authorList>
    </citation>
    <scope>NUCLEOTIDE SEQUENCE [GENOMIC DNA]</scope>
</reference>
<reference key="3">
    <citation type="submission" date="2006-02" db="EMBL/GenBank/DDBJ databases">
        <title>Allele diversity among genes of the sulfate reduction pathway in wine strains of Saccharomyces cerevisiae.</title>
        <authorList>
            <person name="Linderholm A.L."/>
            <person name="Bisson L.F."/>
        </authorList>
    </citation>
    <scope>NUCLEOTIDE SEQUENCE [GENOMIC DNA]</scope>
    <source>
        <strain>UCD939</strain>
        <strain>UCD940</strain>
    </source>
</reference>
<reference key="4">
    <citation type="journal article" date="1997" name="Nature">
        <title>The nucleotide sequence of Saccharomyces cerevisiae chromosome V.</title>
        <authorList>
            <person name="Dietrich F.S."/>
            <person name="Mulligan J.T."/>
            <person name="Hennessy K.M."/>
            <person name="Yelton M.A."/>
            <person name="Allen E."/>
            <person name="Araujo R."/>
            <person name="Aviles E."/>
            <person name="Berno A."/>
            <person name="Brennan T."/>
            <person name="Carpenter J."/>
            <person name="Chen E."/>
            <person name="Cherry J.M."/>
            <person name="Chung E."/>
            <person name="Duncan M."/>
            <person name="Guzman E."/>
            <person name="Hartzell G."/>
            <person name="Hunicke-Smith S."/>
            <person name="Hyman R.W."/>
            <person name="Kayser A."/>
            <person name="Komp C."/>
            <person name="Lashkari D."/>
            <person name="Lew H."/>
            <person name="Lin D."/>
            <person name="Mosedale D."/>
            <person name="Nakahara K."/>
            <person name="Namath A."/>
            <person name="Norgren R."/>
            <person name="Oefner P."/>
            <person name="Oh C."/>
            <person name="Petel F.X."/>
            <person name="Roberts D."/>
            <person name="Sehl P."/>
            <person name="Schramm S."/>
            <person name="Shogren T."/>
            <person name="Smith V."/>
            <person name="Taylor P."/>
            <person name="Wei Y."/>
            <person name="Botstein D."/>
            <person name="Davis R.W."/>
        </authorList>
    </citation>
    <scope>NUCLEOTIDE SEQUENCE [LARGE SCALE GENOMIC DNA]</scope>
    <source>
        <strain>ATCC 204508 / S288c</strain>
    </source>
</reference>
<reference key="5">
    <citation type="journal article" date="2014" name="G3 (Bethesda)">
        <title>The reference genome sequence of Saccharomyces cerevisiae: Then and now.</title>
        <authorList>
            <person name="Engel S.R."/>
            <person name="Dietrich F.S."/>
            <person name="Fisk D.G."/>
            <person name="Binkley G."/>
            <person name="Balakrishnan R."/>
            <person name="Costanzo M.C."/>
            <person name="Dwight S.S."/>
            <person name="Hitz B.C."/>
            <person name="Karra K."/>
            <person name="Nash R.S."/>
            <person name="Weng S."/>
            <person name="Wong E.D."/>
            <person name="Lloyd P."/>
            <person name="Skrzypek M.S."/>
            <person name="Miyasato S.R."/>
            <person name="Simison M."/>
            <person name="Cherry J.M."/>
        </authorList>
    </citation>
    <scope>GENOME REANNOTATION</scope>
    <source>
        <strain>ATCC 204508 / S288c</strain>
    </source>
</reference>
<reference key="6">
    <citation type="journal article" date="1988" name="Agric. Biol. Chem.">
        <title>The expression of the gamma-glutamylcysteine synthetase gene of Escherichia coli B in Saccharomyces cerevisiae.</title>
        <authorList>
            <person name="Ohtake Y."/>
            <person name="Watanabe K."/>
            <person name="Tezuka H."/>
            <person name="Ogata T."/>
            <person name="Yabuuchi S."/>
            <person name="Murata K."/>
            <person name="Kimura A."/>
        </authorList>
    </citation>
    <scope>NUCLEOTIDE SEQUENCE [GENOMIC DNA] OF 1-486</scope>
    <source>
        <strain>YMN27</strain>
    </source>
</reference>
<reference key="7">
    <citation type="journal article" date="1995" name="Yeast">
        <title>Two-dimensional protein map of Saccharomyces cerevisiae: construction of a gene-protein index.</title>
        <authorList>
            <person name="Boucherie H."/>
            <person name="Dujardin G."/>
            <person name="Kermorgant M."/>
            <person name="Monribot C."/>
            <person name="Slonimski P.P."/>
            <person name="Perrot M."/>
        </authorList>
    </citation>
    <scope>PROTEIN SEQUENCE OF 2-14</scope>
    <source>
        <strain>ATCC 204508 / S288c</strain>
    </source>
</reference>
<reference key="8">
    <citation type="journal article" date="1994" name="Electrophoresis">
        <title>Protein identifications for a Saccharomyces cerevisiae protein database.</title>
        <authorList>
            <person name="Garrels J.I."/>
            <person name="Futcher B."/>
            <person name="Kobayashi R."/>
            <person name="Latter G.I."/>
            <person name="Schwender B."/>
            <person name="Volpe T."/>
            <person name="Warner J.R."/>
            <person name="McLaughlin C.S."/>
        </authorList>
    </citation>
    <scope>PROTEIN SEQUENCE OF 693-704</scope>
    <source>
        <strain>ATCC 204508 / S288c</strain>
    </source>
</reference>
<reference key="9">
    <citation type="journal article" date="1996" name="FEMS Microbiol. Lett.">
        <title>Protein expression during exponential growth in 0.7 M NaCl medium of Saccharomyces cerevisiae.</title>
        <authorList>
            <person name="Norbeck J."/>
            <person name="Blomberg A."/>
        </authorList>
    </citation>
    <scope>PROTEIN SEQUENCE OF 123-132; 234-243 AND 692-699</scope>
    <source>
        <strain>ATCC 38531 / Y41</strain>
    </source>
</reference>
<reference key="10">
    <citation type="journal article" date="2003" name="Nature">
        <title>Global analysis of protein expression in yeast.</title>
        <authorList>
            <person name="Ghaemmaghami S."/>
            <person name="Huh W.-K."/>
            <person name="Bower K."/>
            <person name="Howson R.W."/>
            <person name="Belle A."/>
            <person name="Dephoure N."/>
            <person name="O'Shea E.K."/>
            <person name="Weissman J.S."/>
        </authorList>
    </citation>
    <scope>LEVEL OF PROTEIN EXPRESSION [LARGE SCALE ANALYSIS]</scope>
</reference>
<reference key="11">
    <citation type="journal article" date="2007" name="J. Proteome Res.">
        <title>Large-scale phosphorylation analysis of alpha-factor-arrested Saccharomyces cerevisiae.</title>
        <authorList>
            <person name="Li X."/>
            <person name="Gerber S.A."/>
            <person name="Rudner A.D."/>
            <person name="Beausoleil S.A."/>
            <person name="Haas W."/>
            <person name="Villen J."/>
            <person name="Elias J.E."/>
            <person name="Gygi S.P."/>
        </authorList>
    </citation>
    <scope>PHOSPHORYLATION [LARGE SCALE ANALYSIS] AT SER-89 AND SER-706</scope>
    <scope>IDENTIFICATION BY MASS SPECTROMETRY [LARGE SCALE ANALYSIS]</scope>
    <source>
        <strain>ADR376</strain>
    </source>
</reference>
<reference key="12">
    <citation type="journal article" date="2008" name="Mol. Cell. Proteomics">
        <title>A multidimensional chromatography technology for in-depth phosphoproteome analysis.</title>
        <authorList>
            <person name="Albuquerque C.P."/>
            <person name="Smolka M.B."/>
            <person name="Payne S.H."/>
            <person name="Bafna V."/>
            <person name="Eng J."/>
            <person name="Zhou H."/>
        </authorList>
    </citation>
    <scope>PHOSPHORYLATION [LARGE SCALE ANALYSIS] AT SER-242</scope>
    <scope>IDENTIFICATION BY MASS SPECTROMETRY [LARGE SCALE ANALYSIS]</scope>
</reference>
<reference key="13">
    <citation type="journal article" date="2009" name="Science">
        <title>Global analysis of Cdk1 substrate phosphorylation sites provides insights into evolution.</title>
        <authorList>
            <person name="Holt L.J."/>
            <person name="Tuch B.B."/>
            <person name="Villen J."/>
            <person name="Johnson A.D."/>
            <person name="Gygi S.P."/>
            <person name="Morgan D.O."/>
        </authorList>
    </citation>
    <scope>PHOSPHORYLATION [LARGE SCALE ANALYSIS] AT THR-566; SER-629 AND SER-706</scope>
    <scope>IDENTIFICATION BY MASS SPECTROMETRY [LARGE SCALE ANALYSIS]</scope>
</reference>
<reference key="14">
    <citation type="journal article" date="2012" name="Proc. Natl. Acad. Sci. U.S.A.">
        <title>N-terminal acetylome analyses and functional insights of the N-terminal acetyltransferase NatB.</title>
        <authorList>
            <person name="Van Damme P."/>
            <person name="Lasa M."/>
            <person name="Polevoda B."/>
            <person name="Gazquez C."/>
            <person name="Elosegui-Artola A."/>
            <person name="Kim D.S."/>
            <person name="De Juan-Pardo E."/>
            <person name="Demeyer K."/>
            <person name="Hole K."/>
            <person name="Larrea E."/>
            <person name="Timmerman E."/>
            <person name="Prieto J."/>
            <person name="Arnesen T."/>
            <person name="Sherman F."/>
            <person name="Gevaert K."/>
            <person name="Aldabe R."/>
        </authorList>
    </citation>
    <scope>IDENTIFICATION BY MASS SPECTROMETRY [LARGE SCALE ANALYSIS]</scope>
</reference>
<accession>P05694</accession>
<accession>D3DLZ8</accession>
<accession>P38010</accession>
<accession>Q02488</accession>
<accession>Q27JJ8</accession>